<evidence type="ECO:0000255" key="1">
    <source>
        <dbReference type="HAMAP-Rule" id="MF_00639"/>
    </source>
</evidence>
<keyword id="KW-0067">ATP-binding</keyword>
<keyword id="KW-0131">Cell cycle</keyword>
<keyword id="KW-0132">Cell division</keyword>
<keyword id="KW-0133">Cell shape</keyword>
<keyword id="KW-0961">Cell wall biogenesis/degradation</keyword>
<keyword id="KW-0963">Cytoplasm</keyword>
<keyword id="KW-0436">Ligase</keyword>
<keyword id="KW-0547">Nucleotide-binding</keyword>
<keyword id="KW-0573">Peptidoglycan synthesis</keyword>
<protein>
    <recommendedName>
        <fullName evidence="1">UDP-N-acetylmuramoylalanine--D-glutamate ligase</fullName>
        <ecNumber evidence="1">6.3.2.9</ecNumber>
    </recommendedName>
    <alternativeName>
        <fullName evidence="1">D-glutamic acid-adding enzyme</fullName>
    </alternativeName>
    <alternativeName>
        <fullName evidence="1">UDP-N-acetylmuramoyl-L-alanyl-D-glutamate synthetase</fullName>
    </alternativeName>
</protein>
<name>MURD_PETMO</name>
<dbReference type="EC" id="6.3.2.9" evidence="1"/>
<dbReference type="EMBL" id="CP000879">
    <property type="protein sequence ID" value="ABX32508.1"/>
    <property type="molecule type" value="Genomic_DNA"/>
</dbReference>
<dbReference type="RefSeq" id="WP_012209605.1">
    <property type="nucleotide sequence ID" value="NC_010003.1"/>
</dbReference>
<dbReference type="SMR" id="A9BGS7"/>
<dbReference type="STRING" id="403833.Pmob_1819"/>
<dbReference type="KEGG" id="pmo:Pmob_1819"/>
<dbReference type="eggNOG" id="COG0771">
    <property type="taxonomic scope" value="Bacteria"/>
</dbReference>
<dbReference type="HOGENOM" id="CLU_032540_0_0_0"/>
<dbReference type="UniPathway" id="UPA00219"/>
<dbReference type="Proteomes" id="UP000000789">
    <property type="component" value="Chromosome"/>
</dbReference>
<dbReference type="GO" id="GO:0005737">
    <property type="term" value="C:cytoplasm"/>
    <property type="evidence" value="ECO:0007669"/>
    <property type="project" value="UniProtKB-SubCell"/>
</dbReference>
<dbReference type="GO" id="GO:0005524">
    <property type="term" value="F:ATP binding"/>
    <property type="evidence" value="ECO:0007669"/>
    <property type="project" value="UniProtKB-UniRule"/>
</dbReference>
<dbReference type="GO" id="GO:0008764">
    <property type="term" value="F:UDP-N-acetylmuramoylalanine-D-glutamate ligase activity"/>
    <property type="evidence" value="ECO:0007669"/>
    <property type="project" value="UniProtKB-UniRule"/>
</dbReference>
<dbReference type="GO" id="GO:0051301">
    <property type="term" value="P:cell division"/>
    <property type="evidence" value="ECO:0007669"/>
    <property type="project" value="UniProtKB-KW"/>
</dbReference>
<dbReference type="GO" id="GO:0071555">
    <property type="term" value="P:cell wall organization"/>
    <property type="evidence" value="ECO:0007669"/>
    <property type="project" value="UniProtKB-KW"/>
</dbReference>
<dbReference type="GO" id="GO:0009252">
    <property type="term" value="P:peptidoglycan biosynthetic process"/>
    <property type="evidence" value="ECO:0007669"/>
    <property type="project" value="UniProtKB-UniRule"/>
</dbReference>
<dbReference type="GO" id="GO:0008360">
    <property type="term" value="P:regulation of cell shape"/>
    <property type="evidence" value="ECO:0007669"/>
    <property type="project" value="UniProtKB-KW"/>
</dbReference>
<dbReference type="Gene3D" id="3.90.190.20">
    <property type="entry name" value="Mur ligase, C-terminal domain"/>
    <property type="match status" value="1"/>
</dbReference>
<dbReference type="Gene3D" id="3.40.1190.10">
    <property type="entry name" value="Mur-like, catalytic domain"/>
    <property type="match status" value="1"/>
</dbReference>
<dbReference type="Gene3D" id="3.40.50.720">
    <property type="entry name" value="NAD(P)-binding Rossmann-like Domain"/>
    <property type="match status" value="1"/>
</dbReference>
<dbReference type="HAMAP" id="MF_00639">
    <property type="entry name" value="MurD"/>
    <property type="match status" value="1"/>
</dbReference>
<dbReference type="InterPro" id="IPR036565">
    <property type="entry name" value="Mur-like_cat_sf"/>
</dbReference>
<dbReference type="InterPro" id="IPR004101">
    <property type="entry name" value="Mur_ligase_C"/>
</dbReference>
<dbReference type="InterPro" id="IPR036615">
    <property type="entry name" value="Mur_ligase_C_dom_sf"/>
</dbReference>
<dbReference type="InterPro" id="IPR013221">
    <property type="entry name" value="Mur_ligase_cen"/>
</dbReference>
<dbReference type="InterPro" id="IPR005762">
    <property type="entry name" value="MurD"/>
</dbReference>
<dbReference type="NCBIfam" id="TIGR01087">
    <property type="entry name" value="murD"/>
    <property type="match status" value="1"/>
</dbReference>
<dbReference type="PANTHER" id="PTHR43692">
    <property type="entry name" value="UDP-N-ACETYLMURAMOYLALANINE--D-GLUTAMATE LIGASE"/>
    <property type="match status" value="1"/>
</dbReference>
<dbReference type="PANTHER" id="PTHR43692:SF1">
    <property type="entry name" value="UDP-N-ACETYLMURAMOYLALANINE--D-GLUTAMATE LIGASE"/>
    <property type="match status" value="1"/>
</dbReference>
<dbReference type="Pfam" id="PF02875">
    <property type="entry name" value="Mur_ligase_C"/>
    <property type="match status" value="1"/>
</dbReference>
<dbReference type="Pfam" id="PF08245">
    <property type="entry name" value="Mur_ligase_M"/>
    <property type="match status" value="1"/>
</dbReference>
<dbReference type="Pfam" id="PF21377">
    <property type="entry name" value="MurD_N"/>
    <property type="match status" value="1"/>
</dbReference>
<dbReference type="SUPFAM" id="SSF51984">
    <property type="entry name" value="MurCD N-terminal domain"/>
    <property type="match status" value="1"/>
</dbReference>
<dbReference type="SUPFAM" id="SSF53623">
    <property type="entry name" value="MurD-like peptide ligases, catalytic domain"/>
    <property type="match status" value="1"/>
</dbReference>
<dbReference type="SUPFAM" id="SSF53244">
    <property type="entry name" value="MurD-like peptide ligases, peptide-binding domain"/>
    <property type="match status" value="1"/>
</dbReference>
<comment type="function">
    <text evidence="1">Cell wall formation. Catalyzes the addition of glutamate to the nucleotide precursor UDP-N-acetylmuramoyl-L-alanine (UMA).</text>
</comment>
<comment type="catalytic activity">
    <reaction evidence="1">
        <text>UDP-N-acetyl-alpha-D-muramoyl-L-alanine + D-glutamate + ATP = UDP-N-acetyl-alpha-D-muramoyl-L-alanyl-D-glutamate + ADP + phosphate + H(+)</text>
        <dbReference type="Rhea" id="RHEA:16429"/>
        <dbReference type="ChEBI" id="CHEBI:15378"/>
        <dbReference type="ChEBI" id="CHEBI:29986"/>
        <dbReference type="ChEBI" id="CHEBI:30616"/>
        <dbReference type="ChEBI" id="CHEBI:43474"/>
        <dbReference type="ChEBI" id="CHEBI:83898"/>
        <dbReference type="ChEBI" id="CHEBI:83900"/>
        <dbReference type="ChEBI" id="CHEBI:456216"/>
        <dbReference type="EC" id="6.3.2.9"/>
    </reaction>
</comment>
<comment type="pathway">
    <text evidence="1">Cell wall biogenesis; peptidoglycan biosynthesis.</text>
</comment>
<comment type="subcellular location">
    <subcellularLocation>
        <location evidence="1">Cytoplasm</location>
    </subcellularLocation>
</comment>
<comment type="similarity">
    <text evidence="1">Belongs to the MurCDEF family.</text>
</comment>
<gene>
    <name evidence="1" type="primary">murD</name>
    <name type="ordered locus">Pmob_1819</name>
</gene>
<proteinExistence type="inferred from homology"/>
<organism>
    <name type="scientific">Petrotoga mobilis (strain DSM 10674 / SJ95)</name>
    <dbReference type="NCBI Taxonomy" id="403833"/>
    <lineage>
        <taxon>Bacteria</taxon>
        <taxon>Thermotogati</taxon>
        <taxon>Thermotogota</taxon>
        <taxon>Thermotogae</taxon>
        <taxon>Petrotogales</taxon>
        <taxon>Petrotogaceae</taxon>
        <taxon>Petrotoga</taxon>
    </lineage>
</organism>
<accession>A9BGS7</accession>
<sequence length="431" mass="49066">MKICLVGYGKSNNELLTKLLKSNHEIFVSQDKDFTKTDEIYFKKNNIQYETNHNDLLKNCDLAIVSPGIPPNSKAAKIIFENNIDYTTELEYSWQNIKKENKKAVFIGITGTDGKSTTTSLIGHILKFADPLTFVGGNIGVPLAKASETLNYYVVEVSSFQIFWSKTFTPEISVLTNLAPDHLNWHKDLNDYYQTKAKLLLRTLKSGGVAVVNEDAVNLLNLKDYQASERIITFSKNMIEGNYIKYKDKKIQVNNKIFELDIFKEDILASAVTTLNLGISEKIIEEAINSFKPLKYRLELIKSKNGVNYYNDSKATNVHSAYNAYKSFRGMHYIAILSGIPKNEDLTPLIEELKTYAKAVIVFGEMEKEVKKYPLNSKFIFKNNLEEVFLYLSEICEVGDNVVFSPAGASFDKYKNYEERGEHFNLLVEKS</sequence>
<feature type="chain" id="PRO_1000130870" description="UDP-N-acetylmuramoylalanine--D-glutamate ligase">
    <location>
        <begin position="1"/>
        <end position="431"/>
    </location>
</feature>
<feature type="binding site" evidence="1">
    <location>
        <begin position="111"/>
        <end position="117"/>
    </location>
    <ligand>
        <name>ATP</name>
        <dbReference type="ChEBI" id="CHEBI:30616"/>
    </ligand>
</feature>
<reference key="1">
    <citation type="submission" date="2007-11" db="EMBL/GenBank/DDBJ databases">
        <title>Complete sequence of Petroga mobilis SJ95.</title>
        <authorList>
            <consortium name="US DOE Joint Genome Institute"/>
            <person name="Copeland A."/>
            <person name="Lucas S."/>
            <person name="Lapidus A."/>
            <person name="Barry K."/>
            <person name="Glavina del Rio T."/>
            <person name="Dalin E."/>
            <person name="Tice H."/>
            <person name="Pitluck S."/>
            <person name="Meincke L."/>
            <person name="Brettin T."/>
            <person name="Bruce D."/>
            <person name="Detter J.C."/>
            <person name="Han C."/>
            <person name="Kuske C.R."/>
            <person name="Schmutz J."/>
            <person name="Larimer F."/>
            <person name="Land M."/>
            <person name="Hauser L."/>
            <person name="Kyrpides N."/>
            <person name="Mikhailova N."/>
            <person name="Noll K."/>
            <person name="Richardson P."/>
        </authorList>
    </citation>
    <scope>NUCLEOTIDE SEQUENCE [LARGE SCALE GENOMIC DNA]</scope>
    <source>
        <strain>DSM 10674 / SJ95</strain>
    </source>
</reference>